<name>TO6BL_HUMAN</name>
<evidence type="ECO:0000250" key="1">
    <source>
        <dbReference type="UniProtKB" id="J3QMY9"/>
    </source>
</evidence>
<evidence type="ECO:0000255" key="2"/>
<evidence type="ECO:0000256" key="3">
    <source>
        <dbReference type="SAM" id="MobiDB-lite"/>
    </source>
</evidence>
<evidence type="ECO:0000269" key="4">
    <source>
    </source>
</evidence>
<evidence type="ECO:0000269" key="5">
    <source>
    </source>
</evidence>
<evidence type="ECO:0000305" key="6"/>
<evidence type="ECO:0000312" key="7">
    <source>
        <dbReference type="HGNC" id="HGNC:26197"/>
    </source>
</evidence>
<protein>
    <recommendedName>
        <fullName evidence="1">Type 2 DNA topoisomerase 6 subunit B-like</fullName>
    </recommendedName>
    <alternativeName>
        <fullName evidence="7">TOP6B like initiator of meiotic double strand breaks</fullName>
    </alternativeName>
    <alternativeName>
        <fullName evidence="1">Type 2 DNA topoisomerase VI subunit B-like</fullName>
        <shortName evidence="1">TOPOVIBL</shortName>
    </alternativeName>
</protein>
<reference key="1">
    <citation type="journal article" date="2004" name="Nat. Genet.">
        <title>Complete sequencing and characterization of 21,243 full-length human cDNAs.</title>
        <authorList>
            <person name="Ota T."/>
            <person name="Suzuki Y."/>
            <person name="Nishikawa T."/>
            <person name="Otsuki T."/>
            <person name="Sugiyama T."/>
            <person name="Irie R."/>
            <person name="Wakamatsu A."/>
            <person name="Hayashi K."/>
            <person name="Sato H."/>
            <person name="Nagai K."/>
            <person name="Kimura K."/>
            <person name="Makita H."/>
            <person name="Sekine M."/>
            <person name="Obayashi M."/>
            <person name="Nishi T."/>
            <person name="Shibahara T."/>
            <person name="Tanaka T."/>
            <person name="Ishii S."/>
            <person name="Yamamoto J."/>
            <person name="Saito K."/>
            <person name="Kawai Y."/>
            <person name="Isono Y."/>
            <person name="Nakamura Y."/>
            <person name="Nagahari K."/>
            <person name="Murakami K."/>
            <person name="Yasuda T."/>
            <person name="Iwayanagi T."/>
            <person name="Wagatsuma M."/>
            <person name="Shiratori A."/>
            <person name="Sudo H."/>
            <person name="Hosoiri T."/>
            <person name="Kaku Y."/>
            <person name="Kodaira H."/>
            <person name="Kondo H."/>
            <person name="Sugawara M."/>
            <person name="Takahashi M."/>
            <person name="Kanda K."/>
            <person name="Yokoi T."/>
            <person name="Furuya T."/>
            <person name="Kikkawa E."/>
            <person name="Omura Y."/>
            <person name="Abe K."/>
            <person name="Kamihara K."/>
            <person name="Katsuta N."/>
            <person name="Sato K."/>
            <person name="Tanikawa M."/>
            <person name="Yamazaki M."/>
            <person name="Ninomiya K."/>
            <person name="Ishibashi T."/>
            <person name="Yamashita H."/>
            <person name="Murakawa K."/>
            <person name="Fujimori K."/>
            <person name="Tanai H."/>
            <person name="Kimata M."/>
            <person name="Watanabe M."/>
            <person name="Hiraoka S."/>
            <person name="Chiba Y."/>
            <person name="Ishida S."/>
            <person name="Ono Y."/>
            <person name="Takiguchi S."/>
            <person name="Watanabe S."/>
            <person name="Yosida M."/>
            <person name="Hotuta T."/>
            <person name="Kusano J."/>
            <person name="Kanehori K."/>
            <person name="Takahashi-Fujii A."/>
            <person name="Hara H."/>
            <person name="Tanase T.-O."/>
            <person name="Nomura Y."/>
            <person name="Togiya S."/>
            <person name="Komai F."/>
            <person name="Hara R."/>
            <person name="Takeuchi K."/>
            <person name="Arita M."/>
            <person name="Imose N."/>
            <person name="Musashino K."/>
            <person name="Yuuki H."/>
            <person name="Oshima A."/>
            <person name="Sasaki N."/>
            <person name="Aotsuka S."/>
            <person name="Yoshikawa Y."/>
            <person name="Matsunawa H."/>
            <person name="Ichihara T."/>
            <person name="Shiohata N."/>
            <person name="Sano S."/>
            <person name="Moriya S."/>
            <person name="Momiyama H."/>
            <person name="Satoh N."/>
            <person name="Takami S."/>
            <person name="Terashima Y."/>
            <person name="Suzuki O."/>
            <person name="Nakagawa S."/>
            <person name="Senoh A."/>
            <person name="Mizoguchi H."/>
            <person name="Goto Y."/>
            <person name="Shimizu F."/>
            <person name="Wakebe H."/>
            <person name="Hishigaki H."/>
            <person name="Watanabe T."/>
            <person name="Sugiyama A."/>
            <person name="Takemoto M."/>
            <person name="Kawakami B."/>
            <person name="Yamazaki M."/>
            <person name="Watanabe K."/>
            <person name="Kumagai A."/>
            <person name="Itakura S."/>
            <person name="Fukuzumi Y."/>
            <person name="Fujimori Y."/>
            <person name="Komiyama M."/>
            <person name="Tashiro H."/>
            <person name="Tanigami A."/>
            <person name="Fujiwara T."/>
            <person name="Ono T."/>
            <person name="Yamada K."/>
            <person name="Fujii Y."/>
            <person name="Ozaki K."/>
            <person name="Hirao M."/>
            <person name="Ohmori Y."/>
            <person name="Kawabata A."/>
            <person name="Hikiji T."/>
            <person name="Kobatake N."/>
            <person name="Inagaki H."/>
            <person name="Ikema Y."/>
            <person name="Okamoto S."/>
            <person name="Okitani R."/>
            <person name="Kawakami T."/>
            <person name="Noguchi S."/>
            <person name="Itoh T."/>
            <person name="Shigeta K."/>
            <person name="Senba T."/>
            <person name="Matsumura K."/>
            <person name="Nakajima Y."/>
            <person name="Mizuno T."/>
            <person name="Morinaga M."/>
            <person name="Sasaki M."/>
            <person name="Togashi T."/>
            <person name="Oyama M."/>
            <person name="Hata H."/>
            <person name="Watanabe M."/>
            <person name="Komatsu T."/>
            <person name="Mizushima-Sugano J."/>
            <person name="Satoh T."/>
            <person name="Shirai Y."/>
            <person name="Takahashi Y."/>
            <person name="Nakagawa K."/>
            <person name="Okumura K."/>
            <person name="Nagase T."/>
            <person name="Nomura N."/>
            <person name="Kikuchi H."/>
            <person name="Masuho Y."/>
            <person name="Yamashita R."/>
            <person name="Nakai K."/>
            <person name="Yada T."/>
            <person name="Nakamura Y."/>
            <person name="Ohara O."/>
            <person name="Isogai T."/>
            <person name="Sugano S."/>
        </authorList>
    </citation>
    <scope>NUCLEOTIDE SEQUENCE [LARGE SCALE MRNA] (ISOFORM 2)</scope>
</reference>
<reference key="2">
    <citation type="journal article" date="2009" name="DNA Res.">
        <title>Identification and functional analyses of 11,769 full-length human cDNAs focused on alternative splicing.</title>
        <authorList>
            <person name="Wakamatsu A."/>
            <person name="Kimura K."/>
            <person name="Yamamoto J."/>
            <person name="Nishikawa T."/>
            <person name="Nomura N."/>
            <person name="Sugano S."/>
            <person name="Isogai T."/>
        </authorList>
    </citation>
    <scope>NUCLEOTIDE SEQUENCE [LARGE SCALE MRNA] (ISOFORM 4)</scope>
</reference>
<reference key="3">
    <citation type="journal article" date="2006" name="Nature">
        <title>Human chromosome 11 DNA sequence and analysis including novel gene identification.</title>
        <authorList>
            <person name="Taylor T.D."/>
            <person name="Noguchi H."/>
            <person name="Totoki Y."/>
            <person name="Toyoda A."/>
            <person name="Kuroki Y."/>
            <person name="Dewar K."/>
            <person name="Lloyd C."/>
            <person name="Itoh T."/>
            <person name="Takeda T."/>
            <person name="Kim D.-W."/>
            <person name="She X."/>
            <person name="Barlow K.F."/>
            <person name="Bloom T."/>
            <person name="Bruford E."/>
            <person name="Chang J.L."/>
            <person name="Cuomo C.A."/>
            <person name="Eichler E."/>
            <person name="FitzGerald M.G."/>
            <person name="Jaffe D.B."/>
            <person name="LaButti K."/>
            <person name="Nicol R."/>
            <person name="Park H.-S."/>
            <person name="Seaman C."/>
            <person name="Sougnez C."/>
            <person name="Yang X."/>
            <person name="Zimmer A.R."/>
            <person name="Zody M.C."/>
            <person name="Birren B.W."/>
            <person name="Nusbaum C."/>
            <person name="Fujiyama A."/>
            <person name="Hattori M."/>
            <person name="Rogers J."/>
            <person name="Lander E.S."/>
            <person name="Sakaki Y."/>
        </authorList>
    </citation>
    <scope>NUCLEOTIDE SEQUENCE [LARGE SCALE GENOMIC DNA]</scope>
</reference>
<reference key="4">
    <citation type="journal article" date="2004" name="Genome Res.">
        <title>The status, quality, and expansion of the NIH full-length cDNA project: the Mammalian Gene Collection (MGC).</title>
        <authorList>
            <consortium name="The MGC Project Team"/>
        </authorList>
    </citation>
    <scope>NUCLEOTIDE SEQUENCE [LARGE SCALE MRNA] (ISOFORM 1)</scope>
    <source>
        <tissue>Brain</tissue>
    </source>
</reference>
<reference key="5">
    <citation type="journal article" date="2007" name="Cytogenet. Genome Res.">
        <title>The molecular basis of the folate-sensitive fragile site FRA11A at 11q13.</title>
        <authorList>
            <person name="Debacker K."/>
            <person name="Winnepenninckx B."/>
            <person name="Longman C."/>
            <person name="Colgan J."/>
            <person name="Tolmie J."/>
            <person name="Murray R."/>
            <person name="van Luijk R."/>
            <person name="Scheers S."/>
            <person name="Fitzpatrick D."/>
            <person name="Kooy F."/>
        </authorList>
    </citation>
    <scope>TISSUE SPECIFICITY</scope>
</reference>
<reference key="6">
    <citation type="journal article" date="2016" name="Science">
        <title>The TopoVIB-Like protein family is required for meiotic DNA double-strand break formation.</title>
        <authorList>
            <person name="Robert T."/>
            <person name="Nore A."/>
            <person name="Brun C."/>
            <person name="Maffre C."/>
            <person name="Crimi B."/>
            <person name="Bourbon H.M."/>
            <person name="de Massy B."/>
        </authorList>
    </citation>
    <scope>IDENTIFICATION (ISOFORM 3)</scope>
</reference>
<reference key="7">
    <citation type="journal article" date="2018" name="Am. J. Hum. Genet.">
        <title>Causative mutations and mechanism of androgenetic hydatidiform moles.</title>
        <authorList>
            <person name="Nguyen N.M.P."/>
            <person name="Ge Z.J."/>
            <person name="Reddy R."/>
            <person name="Fahiminiya S."/>
            <person name="Sauthier P."/>
            <person name="Bagga R."/>
            <person name="Sahin F.I."/>
            <person name="Mahadevan S."/>
            <person name="Osmond M."/>
            <person name="Breguet M."/>
            <person name="Rahimi K."/>
            <person name="Lapensee L."/>
            <person name="Hovanes K."/>
            <person name="Srinivasan R."/>
            <person name="Van den Veyver I.B."/>
            <person name="Sahoo T."/>
            <person name="Ao A."/>
            <person name="Majewski J."/>
            <person name="Taketo T."/>
            <person name="Slim R."/>
        </authorList>
    </citation>
    <scope>VARIANT HYDM4 PRO-336</scope>
    <scope>INVOLVEMENT IN HYDM4</scope>
    <scope>TISSUE SPECIFICITY</scope>
</reference>
<feature type="chain" id="PRO_0000296622" description="Type 2 DNA topoisomerase 6 subunit B-like">
    <location>
        <begin position="1"/>
        <end position="511"/>
    </location>
</feature>
<feature type="region of interest" description="Disordered" evidence="3">
    <location>
        <begin position="398"/>
        <end position="485"/>
    </location>
</feature>
<feature type="compositionally biased region" description="Polar residues" evidence="3">
    <location>
        <begin position="408"/>
        <end position="422"/>
    </location>
</feature>
<feature type="compositionally biased region" description="Low complexity" evidence="3">
    <location>
        <begin position="440"/>
        <end position="451"/>
    </location>
</feature>
<feature type="compositionally biased region" description="Basic and acidic residues" evidence="3">
    <location>
        <begin position="466"/>
        <end position="475"/>
    </location>
</feature>
<feature type="splice variant" id="VSP_062217" description="In isoform 1 and isoform 2.">
    <original>M</original>
    <variation>MVASAGSLFGGM</variation>
    <location>
        <position position="1"/>
    </location>
</feature>
<feature type="splice variant" id="VSP_062218" description="In isoform 3.">
    <original>M</original>
    <variation>MEGTAVAVFEILRFLIIHWKCDIDVSKGALLEGQLVISIEGLNSKHQANALHCVTTVASAGSLFGGM</variation>
    <location>
        <position position="1"/>
    </location>
</feature>
<feature type="splice variant" id="VSP_062219" description="In isoform 1, isoform 2 and isoform 3.">
    <location>
        <position position="116"/>
    </location>
</feature>
<feature type="splice variant" id="VSP_062220" description="In isoform 2.">
    <location>
        <begin position="323"/>
        <end position="359"/>
    </location>
</feature>
<feature type="splice variant" id="VSP_062221" description="In isoform 1, isoform 2 and isoform 3.">
    <original>Q</original>
    <variation>QQ</variation>
    <location>
        <position position="391"/>
    </location>
</feature>
<feature type="sequence variant" id="VAR_082606" description="In HYDM4; uncertain significance; dbSNP:rs1449401018." evidence="5">
    <original>S</original>
    <variation>P</variation>
    <location>
        <position position="336"/>
    </location>
</feature>
<sequence length="511" mass="57042">MVLKKFLKEIQSILPGISAKLTWTSEEGSYSQDMTGVTPFQMIFEVDEKPRTLMTDCLVIKHFLRKIIMVHPKVRFHFSVKVNGILSTEIFGVENEPTLNLGNGIALLVDSQHYVSRPNFGTIESHCSRIHPVLGHPVMLFIPEDVAGMDLLGELILTPAAALCPSPKVSSNQLNRISSVSIFLYGPLGLPLILSTWEQPMTTFFKDTSSLVDWKKYHLCMIPNLDLNLDRDLVLPDVSYQVESSEEDQSQTMDPQGQTLLLFLFVDFHSAFPVQQMEIWGVYTLLTTHLNAILVESHSVVQGSIQFTVDKVLEQHHQAAKAQQKLQASLSVAVNSIMSILTGSTRSSFRKMCLQTLQAADTQEFRTKLHKVFREITQHQFLHHCSCEVKQLTLEKKDSAQGTEDAPDNSSLELLADTSGQAENKRLKRGSPRIEEMRALRSARAPSPSEAAPRRPEATAAPLTPRGREHREAHGRALAPGRASLGSRLEDVLWLQEVSNLSEWLSPSPGP</sequence>
<keyword id="KW-0024">Alternative initiation</keyword>
<keyword id="KW-0025">Alternative splicing</keyword>
<keyword id="KW-0158">Chromosome</keyword>
<keyword id="KW-0225">Disease variant</keyword>
<keyword id="KW-0469">Meiosis</keyword>
<keyword id="KW-1267">Proteomics identification</keyword>
<keyword id="KW-1185">Reference proteome</keyword>
<organism>
    <name type="scientific">Homo sapiens</name>
    <name type="common">Human</name>
    <dbReference type="NCBI Taxonomy" id="9606"/>
    <lineage>
        <taxon>Eukaryota</taxon>
        <taxon>Metazoa</taxon>
        <taxon>Chordata</taxon>
        <taxon>Craniata</taxon>
        <taxon>Vertebrata</taxon>
        <taxon>Euteleostomi</taxon>
        <taxon>Mammalia</taxon>
        <taxon>Eutheria</taxon>
        <taxon>Euarchontoglires</taxon>
        <taxon>Primates</taxon>
        <taxon>Haplorrhini</taxon>
        <taxon>Catarrhini</taxon>
        <taxon>Hominidae</taxon>
        <taxon>Homo</taxon>
    </lineage>
</organism>
<dbReference type="EMBL" id="AK026184">
    <property type="protein sequence ID" value="BAB15387.1"/>
    <property type="molecule type" value="mRNA"/>
</dbReference>
<dbReference type="EMBL" id="AK302025">
    <property type="protein sequence ID" value="BAG63423.1"/>
    <property type="molecule type" value="mRNA"/>
</dbReference>
<dbReference type="EMBL" id="AP000485">
    <property type="status" value="NOT_ANNOTATED_CDS"/>
    <property type="molecule type" value="Genomic_DNA"/>
</dbReference>
<dbReference type="EMBL" id="AP001157">
    <property type="status" value="NOT_ANNOTATED_CDS"/>
    <property type="molecule type" value="Genomic_DNA"/>
</dbReference>
<dbReference type="EMBL" id="KC877430">
    <property type="status" value="NOT_ANNOTATED_CDS"/>
    <property type="molecule type" value="Genomic_DNA"/>
</dbReference>
<dbReference type="EMBL" id="BC028240">
    <property type="protein sequence ID" value="AAH28240.1"/>
    <property type="molecule type" value="mRNA"/>
</dbReference>
<dbReference type="CCDS" id="CCDS76440.1">
    <molecule id="Q8N6T0-6"/>
</dbReference>
<dbReference type="RefSeq" id="NP_001289013.1">
    <molecule id="Q8N6T0-6"/>
    <property type="nucleotide sequence ID" value="NM_001302084.2"/>
</dbReference>
<dbReference type="RefSeq" id="NP_078926.3">
    <property type="nucleotide sequence ID" value="NM_024650.3"/>
</dbReference>
<dbReference type="SMR" id="Q8N6T0"/>
<dbReference type="BioGRID" id="122822">
    <property type="interactions" value="1"/>
</dbReference>
<dbReference type="FunCoup" id="Q8N6T0">
    <property type="interactions" value="26"/>
</dbReference>
<dbReference type="STRING" id="9606.ENSP00000354227"/>
<dbReference type="PhosphoSitePlus" id="Q8N6T0"/>
<dbReference type="BioMuta" id="C11orf80"/>
<dbReference type="DMDM" id="519668662"/>
<dbReference type="jPOST" id="Q8N6T0"/>
<dbReference type="MassIVE" id="Q8N6T0"/>
<dbReference type="PaxDb" id="9606-ENSP00000354227"/>
<dbReference type="PeptideAtlas" id="Q8N6T0"/>
<dbReference type="ProteomicsDB" id="5448"/>
<dbReference type="ProteomicsDB" id="72226">
    <molecule id="Q8N6T0-1"/>
</dbReference>
<dbReference type="Antibodypedia" id="52536">
    <property type="antibodies" value="16 antibodies from 8 providers"/>
</dbReference>
<dbReference type="DNASU" id="79703"/>
<dbReference type="Ensembl" id="ENST00000525449.6">
    <molecule id="Q8N6T0-5"/>
    <property type="protein sequence ID" value="ENSP00000434648.2"/>
    <property type="gene ID" value="ENSG00000173715.19"/>
</dbReference>
<dbReference type="Ensembl" id="ENST00000540737.7">
    <molecule id="Q8N6T0-6"/>
    <property type="protein sequence ID" value="ENSP00000444319.1"/>
    <property type="gene ID" value="ENSG00000173715.19"/>
</dbReference>
<dbReference type="GeneID" id="79703"/>
<dbReference type="KEGG" id="hsa:79703"/>
<dbReference type="MANE-Select" id="ENST00000540737.7">
    <property type="protein sequence ID" value="ENSP00000444319.1"/>
    <property type="RefSeq nucleotide sequence ID" value="NM_001302084.2"/>
    <property type="RefSeq protein sequence ID" value="NP_001289013.1"/>
</dbReference>
<dbReference type="UCSC" id="uc021qmd.2">
    <molecule id="Q8N6T0-6"/>
    <property type="organism name" value="human"/>
</dbReference>
<dbReference type="AGR" id="HGNC:26197"/>
<dbReference type="CTD" id="79703"/>
<dbReference type="DisGeNET" id="79703"/>
<dbReference type="GeneCards" id="TOP6BL"/>
<dbReference type="HGNC" id="HGNC:26197">
    <property type="gene designation" value="TOP6BL"/>
</dbReference>
<dbReference type="HPA" id="ENSG00000173715">
    <property type="expression patterns" value="Low tissue specificity"/>
</dbReference>
<dbReference type="MalaCards" id="TOP6BL"/>
<dbReference type="MIM" id="616109">
    <property type="type" value="gene"/>
</dbReference>
<dbReference type="MIM" id="618432">
    <property type="type" value="phenotype"/>
</dbReference>
<dbReference type="neXtProt" id="NX_Q8N6T0"/>
<dbReference type="OpenTargets" id="ENSG00000173715"/>
<dbReference type="Orphanet" id="254688">
    <property type="disease" value="Complete hydatidiform mole"/>
</dbReference>
<dbReference type="PharmGKB" id="PA162377704"/>
<dbReference type="VEuPathDB" id="HostDB:ENSG00000173715"/>
<dbReference type="eggNOG" id="ENOG502S5QP">
    <property type="taxonomic scope" value="Eukaryota"/>
</dbReference>
<dbReference type="GeneTree" id="ENSGT00390000009327"/>
<dbReference type="HOGENOM" id="CLU_036362_0_0_1"/>
<dbReference type="InParanoid" id="Q8N6T0"/>
<dbReference type="OMA" id="WGKYAYQ"/>
<dbReference type="PAN-GO" id="Q8N6T0">
    <property type="GO annotations" value="2 GO annotations based on evolutionary models"/>
</dbReference>
<dbReference type="TreeFam" id="TF337039"/>
<dbReference type="PathwayCommons" id="Q8N6T0"/>
<dbReference type="BioGRID-ORCS" id="79703">
    <property type="hits" value="13 hits in 1140 CRISPR screens"/>
</dbReference>
<dbReference type="ChiTaRS" id="C11orf80">
    <property type="organism name" value="human"/>
</dbReference>
<dbReference type="GenomeRNAi" id="79703"/>
<dbReference type="Pharos" id="Q8N6T0">
    <property type="development level" value="Tdark"/>
</dbReference>
<dbReference type="PRO" id="PR:Q8N6T0"/>
<dbReference type="Proteomes" id="UP000005640">
    <property type="component" value="Chromosome 11"/>
</dbReference>
<dbReference type="RNAct" id="Q8N6T0">
    <property type="molecule type" value="protein"/>
</dbReference>
<dbReference type="Bgee" id="ENSG00000173715">
    <property type="expression patterns" value="Expressed in skin of abdomen and 109 other cell types or tissues"/>
</dbReference>
<dbReference type="ExpressionAtlas" id="Q8N6T0">
    <property type="expression patterns" value="baseline and differential"/>
</dbReference>
<dbReference type="GO" id="GO:0005694">
    <property type="term" value="C:chromosome"/>
    <property type="evidence" value="ECO:0007669"/>
    <property type="project" value="UniProtKB-SubCell"/>
</dbReference>
<dbReference type="GO" id="GO:0042138">
    <property type="term" value="P:meiotic DNA double-strand break formation"/>
    <property type="evidence" value="ECO:0000250"/>
    <property type="project" value="UniProtKB"/>
</dbReference>
<dbReference type="GO" id="GO:0007131">
    <property type="term" value="P:reciprocal meiotic recombination"/>
    <property type="evidence" value="ECO:0000250"/>
    <property type="project" value="UniProtKB"/>
</dbReference>
<dbReference type="InterPro" id="IPR028040">
    <property type="entry name" value="TopoVIB-like"/>
</dbReference>
<dbReference type="PANTHER" id="PTHR14652">
    <property type="entry name" value="TYPE 2 DNA TOPOISOMERASE 6 SUBUNIT B-LIKE"/>
    <property type="match status" value="1"/>
</dbReference>
<dbReference type="PANTHER" id="PTHR14652:SF2">
    <property type="entry name" value="TYPE 2 DNA TOPOISOMERASE 6 SUBUNIT B-LIKE"/>
    <property type="match status" value="1"/>
</dbReference>
<dbReference type="Pfam" id="PF15091">
    <property type="entry name" value="DUF4554"/>
    <property type="match status" value="1"/>
</dbReference>
<gene>
    <name evidence="7" type="primary">TOP6BL</name>
    <name type="synonym">C11orf80</name>
</gene>
<accession>Q8N6T0</accession>
<accession>B4DXL1</accession>
<accession>Q9H677</accession>
<comment type="function">
    <molecule>Isoform 3</molecule>
    <text evidence="1">Component of a topoisomerase 6 complex specifically required for meiotic recombination. Together with SPO11, mediates DNA cleavage that forms the double-strand breaks (DSB) that initiate meiotic recombination. The complex promotes relaxation of negative and positive supercoiled DNA and DNA decatenation through cleavage and ligation cycles.</text>
</comment>
<comment type="subunit">
    <molecule>Isoform 3</molecule>
    <text evidence="1">Heterotetramer of SPO11 and 2 TOP6BL chains. Interacts with SPO11.</text>
</comment>
<comment type="subcellular location">
    <subcellularLocation>
        <location evidence="1">Chromosome</location>
    </subcellularLocation>
    <text evidence="1">Localizes to meiotic chromosomes.</text>
</comment>
<comment type="alternative products">
    <event type="alternative splicing"/>
    <event type="alternative initiation"/>
    <isoform>
        <id>Q8N6T0-6</id>
        <name>4</name>
        <sequence type="displayed"/>
    </isoform>
    <isoform>
        <id>Q8N6T0-1</id>
        <name>3</name>
        <sequence type="described" ref="VSP_062218 VSP_062219 VSP_062221"/>
    </isoform>
    <isoform>
        <id>Q8N6T0-4</id>
        <name>1</name>
        <sequence type="described" ref="VSP_062217 VSP_062219 VSP_062221"/>
    </isoform>
    <isoform>
        <id>Q8N6T0-5</id>
        <name>2</name>
        <sequence type="described" ref="VSP_062217 VSP_062219 VSP_062220 VSP_062221"/>
    </isoform>
</comment>
<comment type="tissue specificity">
    <text evidence="4 5">Detected in lung, spleen,colon and in skeletal muscle. Expressed in the ovaries, Fallopian tubes and uterus (PubMed:30388401).</text>
</comment>
<comment type="domain">
    <molecule>Isoform 3</molecule>
    <text evidence="1">Despite a weak sequence similarity, retains most of the structural features of the ancestral archaeal Top6B subunit (AC O05207), including the transducer domain that interacts with the SPO11 subunit and the ATP-binding fold, also named GHKL fold.</text>
</comment>
<comment type="disease" evidence="5">
    <disease id="DI-05568">
        <name>Hydatidiform mole, recurrent, 4</name>
        <acronym>HYDM4</acronym>
        <description>A disorder characterized by excessive trophoblast development that produces a growing mass of tissue inside the uterus at the beginning of a pregnancy. It leads to abnormal pregnancies with no embryo, and cystic degeneration of the chorionic villi.</description>
        <dbReference type="MIM" id="618432"/>
    </disease>
    <text>The disease may be caused by variants affecting the gene represented in this entry.</text>
</comment>
<comment type="miscellaneous">
    <text evidence="4">Expansion of a polymorphic CGG repeat within the 5'-UTR of this gene may be the cause of folate-sensitive fragile site FRA11A. The expansion is identified in the 15-year-old proband with intellectual disability as well as in phenotypically normal members of the family.</text>
</comment>
<comment type="miscellaneous">
    <molecule>Isoform 1</molecule>
    <text evidence="2">Contains a signal peptide sequence at position 1-23.</text>
</comment>
<comment type="similarity">
    <text evidence="6">Belongs to the TOP6B-like family.</text>
</comment>
<proteinExistence type="evidence at protein level"/>